<reference key="1">
    <citation type="submission" date="2005-07" db="EMBL/GenBank/DDBJ databases">
        <title>Isolation of full-length cDNA clones from macaque brain cDNA libraries.</title>
        <authorList>
            <person name="Osada N."/>
            <person name="Hida M."/>
            <person name="Kusuda J."/>
            <person name="Tanuma R."/>
            <person name="Iseki K."/>
            <person name="Hirai M."/>
            <person name="Terao K."/>
            <person name="Suzuki Y."/>
            <person name="Sugano S."/>
            <person name="Hashimoto K."/>
        </authorList>
    </citation>
    <scope>NUCLEOTIDE SEQUENCE [LARGE SCALE MRNA]</scope>
    <source>
        <tissue>Medulla oblongata</tissue>
    </source>
</reference>
<feature type="chain" id="PRO_0000409504" description="E3 ubiquitin-protein ligase RNF146">
    <location>
        <begin position="1"/>
        <end position="360"/>
    </location>
</feature>
<feature type="domain" description="WWE" evidence="6">
    <location>
        <begin position="92"/>
        <end position="168"/>
    </location>
</feature>
<feature type="zinc finger region" description="RING-type" evidence="5">
    <location>
        <begin position="37"/>
        <end position="75"/>
    </location>
</feature>
<feature type="region of interest" description="Disordered" evidence="7">
    <location>
        <begin position="259"/>
        <end position="360"/>
    </location>
</feature>
<feature type="compositionally biased region" description="Acidic residues" evidence="7">
    <location>
        <begin position="284"/>
        <end position="294"/>
    </location>
</feature>
<feature type="compositionally biased region" description="Low complexity" evidence="7">
    <location>
        <begin position="295"/>
        <end position="305"/>
    </location>
</feature>
<feature type="compositionally biased region" description="Polar residues" evidence="7">
    <location>
        <begin position="307"/>
        <end position="333"/>
    </location>
</feature>
<feature type="binding site" evidence="1">
    <location>
        <position position="108"/>
    </location>
    <ligand>
        <name>a glycoprotein</name>
        <dbReference type="ChEBI" id="CHEBI:17089"/>
    </ligand>
    <ligandPart>
        <name>poly[(1''-&gt;2')-ADP-alpha-D-ribose] group</name>
        <dbReference type="ChEBI" id="CHEBI:157741"/>
    </ligandPart>
</feature>
<feature type="binding site" evidence="1">
    <location>
        <position position="111"/>
    </location>
    <ligand>
        <name>a glycoprotein</name>
        <dbReference type="ChEBI" id="CHEBI:17089"/>
    </ligand>
    <ligandPart>
        <name>poly[(1''-&gt;2')-ADP-alpha-D-ribose] group</name>
        <dbReference type="ChEBI" id="CHEBI:157741"/>
    </ligandPart>
</feature>
<feature type="binding site" evidence="1">
    <location>
        <position position="115"/>
    </location>
    <ligand>
        <name>a glycoprotein</name>
        <dbReference type="ChEBI" id="CHEBI:17089"/>
    </ligand>
    <ligandPart>
        <name>poly[(1''-&gt;2')-ADP-alpha-D-ribose] group</name>
        <dbReference type="ChEBI" id="CHEBI:157741"/>
    </ligandPart>
</feature>
<feature type="binding site" evidence="1">
    <location>
        <position position="145"/>
    </location>
    <ligand>
        <name>a glycoprotein</name>
        <dbReference type="ChEBI" id="CHEBI:17089"/>
    </ligand>
    <ligandPart>
        <name>poly[(1''-&gt;2')-ADP-alpha-D-ribose] group</name>
        <dbReference type="ChEBI" id="CHEBI:157741"/>
    </ligandPart>
</feature>
<feature type="binding site" evidence="1">
    <location>
        <position position="154"/>
    </location>
    <ligand>
        <name>a glycoprotein</name>
        <dbReference type="ChEBI" id="CHEBI:17089"/>
    </ligand>
    <ligandPart>
        <name>poly[(1''-&gt;2')-ADP-alpha-D-ribose] group</name>
        <dbReference type="ChEBI" id="CHEBI:157741"/>
    </ligandPart>
</feature>
<feature type="binding site" evidence="1">
    <location>
        <position position="164"/>
    </location>
    <ligand>
        <name>a glycoprotein</name>
        <dbReference type="ChEBI" id="CHEBI:17089"/>
    </ligand>
    <ligandPart>
        <name>poly[(1''-&gt;2')-ADP-alpha-D-ribose] group</name>
        <dbReference type="ChEBI" id="CHEBI:157741"/>
    </ligandPart>
</feature>
<feature type="binding site" evidence="1">
    <location>
        <position position="176"/>
    </location>
    <ligand>
        <name>a glycoprotein</name>
        <dbReference type="ChEBI" id="CHEBI:17089"/>
    </ligand>
    <ligandPart>
        <name>poly[(1''-&gt;2')-ADP-alpha-D-ribose] group</name>
        <dbReference type="ChEBI" id="CHEBI:157741"/>
    </ligandPart>
</feature>
<feature type="modified residue" description="Phosphoserine" evidence="2">
    <location>
        <position position="290"/>
    </location>
</feature>
<feature type="modified residue" description="Phosphoserine" evidence="2">
    <location>
        <position position="294"/>
    </location>
</feature>
<feature type="cross-link" description="Glycyl lysine isopeptide (Lys-Gly) (interchain with G-Cter in ubiquitin)" evidence="4">
    <location>
        <position position="85"/>
    </location>
</feature>
<feature type="cross-link" description="Glycyl lysine isopeptide (Lys-Gly) (interchain with G-Cter in ubiquitin)" evidence="4">
    <location>
        <position position="95"/>
    </location>
</feature>
<feature type="cross-link" description="Glycyl lysine isopeptide (Lys-Gly) (interchain with G-Cter in ubiquitin)" evidence="4">
    <location>
        <position position="131"/>
    </location>
</feature>
<feature type="cross-link" description="Glycyl lysine isopeptide (Lys-Gly) (interchain with G-Cter in ubiquitin)" evidence="4">
    <location>
        <position position="176"/>
    </location>
</feature>
<keyword id="KW-0963">Cytoplasm</keyword>
<keyword id="KW-1017">Isopeptide bond</keyword>
<keyword id="KW-0479">Metal-binding</keyword>
<keyword id="KW-0539">Nucleus</keyword>
<keyword id="KW-0597">Phosphoprotein</keyword>
<keyword id="KW-1185">Reference proteome</keyword>
<keyword id="KW-0808">Transferase</keyword>
<keyword id="KW-0832">Ubl conjugation</keyword>
<keyword id="KW-0833">Ubl conjugation pathway</keyword>
<keyword id="KW-0879">Wnt signaling pathway</keyword>
<keyword id="KW-0862">Zinc</keyword>
<keyword id="KW-0863">Zinc-finger</keyword>
<name>RN146_MACFA</name>
<protein>
    <recommendedName>
        <fullName>E3 ubiquitin-protein ligase RNF146</fullName>
        <ecNumber>2.3.2.27</ecNumber>
    </recommendedName>
    <alternativeName>
        <fullName>Iduna</fullName>
    </alternativeName>
    <alternativeName>
        <fullName>RING finger protein 146</fullName>
    </alternativeName>
    <alternativeName>
        <fullName evidence="8">RING-type E3 ubiquitin transferase RNF146</fullName>
    </alternativeName>
</protein>
<organism>
    <name type="scientific">Macaca fascicularis</name>
    <name type="common">Crab-eating macaque</name>
    <name type="synonym">Cynomolgus monkey</name>
    <dbReference type="NCBI Taxonomy" id="9541"/>
    <lineage>
        <taxon>Eukaryota</taxon>
        <taxon>Metazoa</taxon>
        <taxon>Chordata</taxon>
        <taxon>Craniata</taxon>
        <taxon>Vertebrata</taxon>
        <taxon>Euteleostomi</taxon>
        <taxon>Mammalia</taxon>
        <taxon>Eutheria</taxon>
        <taxon>Euarchontoglires</taxon>
        <taxon>Primates</taxon>
        <taxon>Haplorrhini</taxon>
        <taxon>Catarrhini</taxon>
        <taxon>Cercopithecidae</taxon>
        <taxon>Cercopithecinae</taxon>
        <taxon>Macaca</taxon>
    </lineage>
</organism>
<gene>
    <name type="primary">RNF146</name>
    <name type="ORF">QmoA-14713</name>
</gene>
<accession>Q2PFU6</accession>
<dbReference type="EC" id="2.3.2.27"/>
<dbReference type="EMBL" id="AB220491">
    <property type="protein sequence ID" value="BAE73024.1"/>
    <property type="molecule type" value="mRNA"/>
</dbReference>
<dbReference type="RefSeq" id="NP_001272336.1">
    <property type="nucleotide sequence ID" value="NM_001285407.1"/>
</dbReference>
<dbReference type="RefSeq" id="XP_005551803.1">
    <property type="nucleotide sequence ID" value="XM_005551746.4"/>
</dbReference>
<dbReference type="RefSeq" id="XP_005551804.1">
    <property type="nucleotide sequence ID" value="XM_005551747.4"/>
</dbReference>
<dbReference type="RefSeq" id="XP_005551805.1">
    <property type="nucleotide sequence ID" value="XM_005551748.4"/>
</dbReference>
<dbReference type="RefSeq" id="XP_045247499.1">
    <property type="nucleotide sequence ID" value="XM_045391564.2"/>
</dbReference>
<dbReference type="BMRB" id="Q2PFU6"/>
<dbReference type="SMR" id="Q2PFU6"/>
<dbReference type="STRING" id="9541.ENSMFAP00000041234"/>
<dbReference type="Ensembl" id="ENSMFAT00000093097.1">
    <property type="protein sequence ID" value="ENSMFAP00000050423.1"/>
    <property type="gene ID" value="ENSMFAG00000041368.2"/>
</dbReference>
<dbReference type="GeneID" id="102129183"/>
<dbReference type="CTD" id="81847"/>
<dbReference type="VEuPathDB" id="HostDB:ENSMFAG00000041368"/>
<dbReference type="eggNOG" id="KOG0824">
    <property type="taxonomic scope" value="Eukaryota"/>
</dbReference>
<dbReference type="GeneTree" id="ENSGT00390000000358"/>
<dbReference type="UniPathway" id="UPA00143"/>
<dbReference type="Proteomes" id="UP000233100">
    <property type="component" value="Chromosome 4"/>
</dbReference>
<dbReference type="Bgee" id="ENSMFAG00000041368">
    <property type="expression patterns" value="Expressed in cerebellum and 13 other cell types or tissues"/>
</dbReference>
<dbReference type="GO" id="GO:0005829">
    <property type="term" value="C:cytosol"/>
    <property type="evidence" value="ECO:0000250"/>
    <property type="project" value="UniProtKB"/>
</dbReference>
<dbReference type="GO" id="GO:0005654">
    <property type="term" value="C:nucleoplasm"/>
    <property type="evidence" value="ECO:0007669"/>
    <property type="project" value="Ensembl"/>
</dbReference>
<dbReference type="GO" id="GO:0005886">
    <property type="term" value="C:plasma membrane"/>
    <property type="evidence" value="ECO:0007669"/>
    <property type="project" value="Ensembl"/>
</dbReference>
<dbReference type="GO" id="GO:0072572">
    <property type="term" value="F:poly-ADP-D-ribose binding"/>
    <property type="evidence" value="ECO:0000250"/>
    <property type="project" value="UniProtKB"/>
</dbReference>
<dbReference type="GO" id="GO:0061630">
    <property type="term" value="F:ubiquitin protein ligase activity"/>
    <property type="evidence" value="ECO:0007669"/>
    <property type="project" value="InterPro"/>
</dbReference>
<dbReference type="GO" id="GO:0004842">
    <property type="term" value="F:ubiquitin-protein transferase activity"/>
    <property type="evidence" value="ECO:0000250"/>
    <property type="project" value="UniProtKB"/>
</dbReference>
<dbReference type="GO" id="GO:0008270">
    <property type="term" value="F:zinc ion binding"/>
    <property type="evidence" value="ECO:0007669"/>
    <property type="project" value="UniProtKB-KW"/>
</dbReference>
<dbReference type="GO" id="GO:0090263">
    <property type="term" value="P:positive regulation of canonical Wnt signaling pathway"/>
    <property type="evidence" value="ECO:0000250"/>
    <property type="project" value="UniProtKB"/>
</dbReference>
<dbReference type="GO" id="GO:0051865">
    <property type="term" value="P:protein autoubiquitination"/>
    <property type="evidence" value="ECO:0000250"/>
    <property type="project" value="UniProtKB"/>
</dbReference>
<dbReference type="GO" id="GO:0070936">
    <property type="term" value="P:protein K48-linked ubiquitination"/>
    <property type="evidence" value="ECO:0000250"/>
    <property type="project" value="UniProtKB"/>
</dbReference>
<dbReference type="GO" id="GO:0006511">
    <property type="term" value="P:ubiquitin-dependent protein catabolic process"/>
    <property type="evidence" value="ECO:0000250"/>
    <property type="project" value="UniProtKB"/>
</dbReference>
<dbReference type="GO" id="GO:0016055">
    <property type="term" value="P:Wnt signaling pathway"/>
    <property type="evidence" value="ECO:0007669"/>
    <property type="project" value="UniProtKB-KW"/>
</dbReference>
<dbReference type="CDD" id="cd16546">
    <property type="entry name" value="RING-HC_RNF146"/>
    <property type="match status" value="1"/>
</dbReference>
<dbReference type="FunFam" id="3.30.40.10:FF:000204">
    <property type="entry name" value="E3 ubiquitin-protein ligase RNF146"/>
    <property type="match status" value="1"/>
</dbReference>
<dbReference type="FunFam" id="3.30.720.50:FF:000003">
    <property type="entry name" value="E3 ubiquitin-protein ligase RNF146"/>
    <property type="match status" value="1"/>
</dbReference>
<dbReference type="Gene3D" id="3.30.720.50">
    <property type="match status" value="1"/>
</dbReference>
<dbReference type="Gene3D" id="3.30.40.10">
    <property type="entry name" value="Zinc/RING finger domain, C3HC4 (zinc finger)"/>
    <property type="match status" value="1"/>
</dbReference>
<dbReference type="InterPro" id="IPR044110">
    <property type="entry name" value="RING-HC_RNF146"/>
</dbReference>
<dbReference type="InterPro" id="IPR033509">
    <property type="entry name" value="RNF146"/>
</dbReference>
<dbReference type="InterPro" id="IPR018123">
    <property type="entry name" value="WWE-dom_subgr"/>
</dbReference>
<dbReference type="InterPro" id="IPR004170">
    <property type="entry name" value="WWE_dom"/>
</dbReference>
<dbReference type="InterPro" id="IPR037197">
    <property type="entry name" value="WWE_dom_sf"/>
</dbReference>
<dbReference type="InterPro" id="IPR001841">
    <property type="entry name" value="Znf_RING"/>
</dbReference>
<dbReference type="InterPro" id="IPR013083">
    <property type="entry name" value="Znf_RING/FYVE/PHD"/>
</dbReference>
<dbReference type="InterPro" id="IPR017907">
    <property type="entry name" value="Znf_RING_CS"/>
</dbReference>
<dbReference type="PANTHER" id="PTHR13417">
    <property type="entry name" value="E3 UBIQUITIN-PROTEIN LIGASE RNF146"/>
    <property type="match status" value="1"/>
</dbReference>
<dbReference type="PANTHER" id="PTHR13417:SF2">
    <property type="entry name" value="E3 UBIQUITIN-PROTEIN LIGASE RNF146"/>
    <property type="match status" value="1"/>
</dbReference>
<dbReference type="Pfam" id="PF02825">
    <property type="entry name" value="WWE"/>
    <property type="match status" value="1"/>
</dbReference>
<dbReference type="Pfam" id="PF13920">
    <property type="entry name" value="zf-C3HC4_3"/>
    <property type="match status" value="1"/>
</dbReference>
<dbReference type="SMART" id="SM00184">
    <property type="entry name" value="RING"/>
    <property type="match status" value="1"/>
</dbReference>
<dbReference type="SMART" id="SM00678">
    <property type="entry name" value="WWE"/>
    <property type="match status" value="1"/>
</dbReference>
<dbReference type="SUPFAM" id="SSF57850">
    <property type="entry name" value="RING/U-box"/>
    <property type="match status" value="1"/>
</dbReference>
<dbReference type="SUPFAM" id="SSF117839">
    <property type="entry name" value="WWE domain"/>
    <property type="match status" value="1"/>
</dbReference>
<dbReference type="PROSITE" id="PS50918">
    <property type="entry name" value="WWE"/>
    <property type="match status" value="1"/>
</dbReference>
<dbReference type="PROSITE" id="PS00518">
    <property type="entry name" value="ZF_RING_1"/>
    <property type="match status" value="1"/>
</dbReference>
<dbReference type="PROSITE" id="PS50089">
    <property type="entry name" value="ZF_RING_2"/>
    <property type="match status" value="1"/>
</dbReference>
<sequence length="360" mass="38983">MMAGCGEIDHSINMLPTNRKANESCSNTAPSLTVPECAICLQTCVHPVSLPCKHVFCYLCVKGASWLGKRCALCRQEIPEDFLDKPTLLSPEELKAASRGNGEYAWYYEGRNGWWQYDERTSRELEDAFSKGKKNTEMLIAGFLYVADLENMVQYRRNEHGRRRKIKRDIIDIPKKGVAGLRLDCDANTVNLARESSADGADSVSAQSGASVQPLVSSVRPLTSVDGQLTSPATPSPDASTSLEDSFAHLQLSGDSIAERSHRGEGEEDHESPSSGRVPAPDTSIEETESDASSDSENVSSAVVAQHSLTQQRLLVSNANQTVSDRSDQSGTDRSVAGGGTVSVSVRSRRPDGQCTVTEV</sequence>
<comment type="function">
    <text evidence="3 4">E3 ubiquitin-protein ligase that specifically binds poly-ADP-ribosylated (PARsylated) proteins and mediates their ubiquitination and subsequent degradation. May regulate many important biological processes, such as cell survival and DNA damage response. Acts as an activator of the Wnt signaling pathway by mediating the ubiquitination of PARsylated AXIN1 and AXIN2, 2 key components of the beta-catenin destruction complex. Acts in cooperation with tankyrase proteins (TNKS and TNKS2), which mediate PARsylation of target proteins AXIN1, AXIN2, BLZF1, CASC3, TNKS and TNKS2. Recognizes and binds tankyrase-dependent PARsylated proteins via its WWE domain and mediates their ubiquitination, leading to their degradation. Different ubiquitin linkage types have been observed: TNKS2 undergoes ubiquitination at 'Lys-48' and 'Lys-63', while AXIN1 is only ubiquitinated at 'Lys-48'. May regulate TNKS and TNKS2 subcellular location, preventing aggregation at a centrosomal location. Neuroprotective protein (By similarity). Protects the brain against N-methyl-D-aspartate (NMDA) receptor-mediated glutamate excitotoxicity and ischemia, by interfering with PAR-induced cell death, called parthanatos (By similarity). Prevents nuclear translocation of AIFM1 in a PAR-binding dependent manner (By similarity). Does not affect PARP1 activation. Protects against cell death induced by DNA damaging agents, such as N-methyl-N-nitro-N-nitrosoguanidine (MNNG) and rescues cells from G1 arrest (By similarity). Promotes cell survival after gamma-irradiation. Facilitates DNA repair (By similarity).</text>
</comment>
<comment type="catalytic activity">
    <reaction>
        <text>S-ubiquitinyl-[E2 ubiquitin-conjugating enzyme]-L-cysteine + [acceptor protein]-L-lysine = [E2 ubiquitin-conjugating enzyme]-L-cysteine + N(6)-ubiquitinyl-[acceptor protein]-L-lysine.</text>
        <dbReference type="EC" id="2.3.2.27"/>
    </reaction>
</comment>
<comment type="pathway">
    <text>Protein modification; protein ubiquitination.</text>
</comment>
<comment type="subunit">
    <text evidence="1">Can form homooligomers. Interacts with PARsylated AXIN1, AXIN2, BLZF1, CASC3, H1-2, IPO7, LIG3, NCL, PARP1, XRCC1, XRCC5 and XRCC6. Interacts with DDB1, DHX15, IQGAP1, LRPPRC, PARP2, PRKDC, RUVBL2, TNKS1 and TNKS2. Binding often leads to interactor ubiquitination, in the presence of the appropriate E1 and E2 enzymes, and proteasomal degradation (By similarity).</text>
</comment>
<comment type="subcellular location">
    <subcellularLocation>
        <location evidence="1">Cytoplasm</location>
        <location evidence="1">Cytosol</location>
    </subcellularLocation>
    <subcellularLocation>
        <location evidence="1">Nucleus</location>
    </subcellularLocation>
    <text evidence="1">Translocates to the nucleus after DNA damage, such as laser-induced DNA breaks, and concentrates at DNA breaks. This translocation requires PARP1 activation and PAR-binding (By similarity).</text>
</comment>
<comment type="domain">
    <text evidence="1">The WWE domain mediates non-covalent poly(ADP-ribose)-binding.</text>
</comment>
<comment type="PTM">
    <text evidence="1">Ubiquitinated; autoubiquitinated. Autoubiquitination is enhanced upon poly(ADP-ribose)-binding (By similarity).</text>
</comment>
<proteinExistence type="evidence at transcript level"/>
<evidence type="ECO:0000250" key="1"/>
<evidence type="ECO:0000250" key="2">
    <source>
        <dbReference type="UniProtKB" id="Q5XIK5"/>
    </source>
</evidence>
<evidence type="ECO:0000250" key="3">
    <source>
        <dbReference type="UniProtKB" id="Q9CZW6"/>
    </source>
</evidence>
<evidence type="ECO:0000250" key="4">
    <source>
        <dbReference type="UniProtKB" id="Q9NTX7"/>
    </source>
</evidence>
<evidence type="ECO:0000255" key="5">
    <source>
        <dbReference type="PROSITE-ProRule" id="PRU00175"/>
    </source>
</evidence>
<evidence type="ECO:0000255" key="6">
    <source>
        <dbReference type="PROSITE-ProRule" id="PRU00248"/>
    </source>
</evidence>
<evidence type="ECO:0000256" key="7">
    <source>
        <dbReference type="SAM" id="MobiDB-lite"/>
    </source>
</evidence>
<evidence type="ECO:0000305" key="8"/>